<gene>
    <name evidence="1" type="primary">pdxH</name>
    <name type="ordered locus">PSEEN1277</name>
</gene>
<feature type="chain" id="PRO_0000292317" description="Pyridoxine/pyridoxamine 5'-phosphate oxidase">
    <location>
        <begin position="1"/>
        <end position="215"/>
    </location>
</feature>
<feature type="binding site" evidence="1">
    <location>
        <begin position="9"/>
        <end position="12"/>
    </location>
    <ligand>
        <name>substrate</name>
    </ligand>
</feature>
<feature type="binding site" evidence="1">
    <location>
        <begin position="64"/>
        <end position="69"/>
    </location>
    <ligand>
        <name>FMN</name>
        <dbReference type="ChEBI" id="CHEBI:58210"/>
    </ligand>
</feature>
<feature type="binding site" evidence="1">
    <location>
        <position position="69"/>
    </location>
    <ligand>
        <name>substrate</name>
    </ligand>
</feature>
<feature type="binding site" evidence="1">
    <location>
        <begin position="79"/>
        <end position="80"/>
    </location>
    <ligand>
        <name>FMN</name>
        <dbReference type="ChEBI" id="CHEBI:58210"/>
    </ligand>
</feature>
<feature type="binding site" evidence="1">
    <location>
        <position position="86"/>
    </location>
    <ligand>
        <name>FMN</name>
        <dbReference type="ChEBI" id="CHEBI:58210"/>
    </ligand>
</feature>
<feature type="binding site" evidence="1">
    <location>
        <position position="108"/>
    </location>
    <ligand>
        <name>FMN</name>
        <dbReference type="ChEBI" id="CHEBI:58210"/>
    </ligand>
</feature>
<feature type="binding site" evidence="1">
    <location>
        <position position="126"/>
    </location>
    <ligand>
        <name>substrate</name>
    </ligand>
</feature>
<feature type="binding site" evidence="1">
    <location>
        <position position="130"/>
    </location>
    <ligand>
        <name>substrate</name>
    </ligand>
</feature>
<feature type="binding site" evidence="1">
    <location>
        <position position="134"/>
    </location>
    <ligand>
        <name>substrate</name>
    </ligand>
</feature>
<feature type="binding site" evidence="1">
    <location>
        <begin position="143"/>
        <end position="144"/>
    </location>
    <ligand>
        <name>FMN</name>
        <dbReference type="ChEBI" id="CHEBI:58210"/>
    </ligand>
</feature>
<feature type="binding site" evidence="1">
    <location>
        <position position="188"/>
    </location>
    <ligand>
        <name>FMN</name>
        <dbReference type="ChEBI" id="CHEBI:58210"/>
    </ligand>
</feature>
<feature type="binding site" evidence="1">
    <location>
        <begin position="194"/>
        <end position="196"/>
    </location>
    <ligand>
        <name>substrate</name>
    </ligand>
</feature>
<feature type="binding site" evidence="1">
    <location>
        <position position="198"/>
    </location>
    <ligand>
        <name>FMN</name>
        <dbReference type="ChEBI" id="CHEBI:58210"/>
    </ligand>
</feature>
<keyword id="KW-0285">Flavoprotein</keyword>
<keyword id="KW-0288">FMN</keyword>
<keyword id="KW-0560">Oxidoreductase</keyword>
<keyword id="KW-0664">Pyridoxine biosynthesis</keyword>
<organism>
    <name type="scientific">Pseudomonas entomophila (strain L48)</name>
    <dbReference type="NCBI Taxonomy" id="384676"/>
    <lineage>
        <taxon>Bacteria</taxon>
        <taxon>Pseudomonadati</taxon>
        <taxon>Pseudomonadota</taxon>
        <taxon>Gammaproteobacteria</taxon>
        <taxon>Pseudomonadales</taxon>
        <taxon>Pseudomonadaceae</taxon>
        <taxon>Pseudomonas</taxon>
    </lineage>
</organism>
<reference key="1">
    <citation type="journal article" date="2006" name="Nat. Biotechnol.">
        <title>Complete genome sequence of the entomopathogenic and metabolically versatile soil bacterium Pseudomonas entomophila.</title>
        <authorList>
            <person name="Vodovar N."/>
            <person name="Vallenet D."/>
            <person name="Cruveiller S."/>
            <person name="Rouy Z."/>
            <person name="Barbe V."/>
            <person name="Acosta C."/>
            <person name="Cattolico L."/>
            <person name="Jubin C."/>
            <person name="Lajus A."/>
            <person name="Segurens B."/>
            <person name="Vacherie B."/>
            <person name="Wincker P."/>
            <person name="Weissenbach J."/>
            <person name="Lemaitre B."/>
            <person name="Medigue C."/>
            <person name="Boccard F."/>
        </authorList>
    </citation>
    <scope>NUCLEOTIDE SEQUENCE [LARGE SCALE GENOMIC DNA]</scope>
    <source>
        <strain>L48</strain>
    </source>
</reference>
<comment type="function">
    <text evidence="1">Catalyzes the oxidation of either pyridoxine 5'-phosphate (PNP) or pyridoxamine 5'-phosphate (PMP) into pyridoxal 5'-phosphate (PLP).</text>
</comment>
<comment type="catalytic activity">
    <reaction evidence="1">
        <text>pyridoxamine 5'-phosphate + O2 + H2O = pyridoxal 5'-phosphate + H2O2 + NH4(+)</text>
        <dbReference type="Rhea" id="RHEA:15817"/>
        <dbReference type="ChEBI" id="CHEBI:15377"/>
        <dbReference type="ChEBI" id="CHEBI:15379"/>
        <dbReference type="ChEBI" id="CHEBI:16240"/>
        <dbReference type="ChEBI" id="CHEBI:28938"/>
        <dbReference type="ChEBI" id="CHEBI:58451"/>
        <dbReference type="ChEBI" id="CHEBI:597326"/>
        <dbReference type="EC" id="1.4.3.5"/>
    </reaction>
</comment>
<comment type="catalytic activity">
    <reaction evidence="1">
        <text>pyridoxine 5'-phosphate + O2 = pyridoxal 5'-phosphate + H2O2</text>
        <dbReference type="Rhea" id="RHEA:15149"/>
        <dbReference type="ChEBI" id="CHEBI:15379"/>
        <dbReference type="ChEBI" id="CHEBI:16240"/>
        <dbReference type="ChEBI" id="CHEBI:58589"/>
        <dbReference type="ChEBI" id="CHEBI:597326"/>
        <dbReference type="EC" id="1.4.3.5"/>
    </reaction>
</comment>
<comment type="cofactor">
    <cofactor evidence="1">
        <name>FMN</name>
        <dbReference type="ChEBI" id="CHEBI:58210"/>
    </cofactor>
    <text evidence="1">Binds 1 FMN per subunit.</text>
</comment>
<comment type="pathway">
    <text evidence="1">Cofactor metabolism; pyridoxal 5'-phosphate salvage; pyridoxal 5'-phosphate from pyridoxamine 5'-phosphate: step 1/1.</text>
</comment>
<comment type="pathway">
    <text evidence="1">Cofactor metabolism; pyridoxal 5'-phosphate salvage; pyridoxal 5'-phosphate from pyridoxine 5'-phosphate: step 1/1.</text>
</comment>
<comment type="subunit">
    <text evidence="1">Homodimer.</text>
</comment>
<comment type="similarity">
    <text evidence="1">Belongs to the pyridoxamine 5'-phosphate oxidase family.</text>
</comment>
<dbReference type="EC" id="1.4.3.5" evidence="1"/>
<dbReference type="EMBL" id="CT573326">
    <property type="protein sequence ID" value="CAK14170.1"/>
    <property type="molecule type" value="Genomic_DNA"/>
</dbReference>
<dbReference type="RefSeq" id="WP_011532586.1">
    <property type="nucleotide sequence ID" value="NC_008027.1"/>
</dbReference>
<dbReference type="SMR" id="Q1IDT9"/>
<dbReference type="STRING" id="384676.PSEEN1277"/>
<dbReference type="GeneID" id="32804554"/>
<dbReference type="KEGG" id="pen:PSEEN1277"/>
<dbReference type="eggNOG" id="COG0259">
    <property type="taxonomic scope" value="Bacteria"/>
</dbReference>
<dbReference type="HOGENOM" id="CLU_032263_2_2_6"/>
<dbReference type="OrthoDB" id="9780392at2"/>
<dbReference type="UniPathway" id="UPA01068">
    <property type="reaction ID" value="UER00304"/>
</dbReference>
<dbReference type="UniPathway" id="UPA01068">
    <property type="reaction ID" value="UER00305"/>
</dbReference>
<dbReference type="Proteomes" id="UP000000658">
    <property type="component" value="Chromosome"/>
</dbReference>
<dbReference type="GO" id="GO:0010181">
    <property type="term" value="F:FMN binding"/>
    <property type="evidence" value="ECO:0007669"/>
    <property type="project" value="UniProtKB-UniRule"/>
</dbReference>
<dbReference type="GO" id="GO:0004733">
    <property type="term" value="F:pyridoxamine phosphate oxidase activity"/>
    <property type="evidence" value="ECO:0007669"/>
    <property type="project" value="UniProtKB-UniRule"/>
</dbReference>
<dbReference type="GO" id="GO:0008615">
    <property type="term" value="P:pyridoxine biosynthetic process"/>
    <property type="evidence" value="ECO:0007669"/>
    <property type="project" value="UniProtKB-KW"/>
</dbReference>
<dbReference type="FunFam" id="2.30.110.10:FF:000011">
    <property type="entry name" value="Chromosome 7, whole genome shotgun sequence"/>
    <property type="match status" value="1"/>
</dbReference>
<dbReference type="Gene3D" id="2.30.110.10">
    <property type="entry name" value="Electron Transport, Fmn-binding Protein, Chain A"/>
    <property type="match status" value="1"/>
</dbReference>
<dbReference type="HAMAP" id="MF_01629">
    <property type="entry name" value="PdxH"/>
    <property type="match status" value="1"/>
</dbReference>
<dbReference type="InterPro" id="IPR000659">
    <property type="entry name" value="Pyridox_Oxase"/>
</dbReference>
<dbReference type="InterPro" id="IPR019740">
    <property type="entry name" value="Pyridox_Oxase_CS"/>
</dbReference>
<dbReference type="InterPro" id="IPR011576">
    <property type="entry name" value="Pyridox_Oxase_N"/>
</dbReference>
<dbReference type="InterPro" id="IPR019576">
    <property type="entry name" value="Pyridoxamine_oxidase_dimer_C"/>
</dbReference>
<dbReference type="InterPro" id="IPR012349">
    <property type="entry name" value="Split_barrel_FMN-bd"/>
</dbReference>
<dbReference type="NCBIfam" id="TIGR00558">
    <property type="entry name" value="pdxH"/>
    <property type="match status" value="1"/>
</dbReference>
<dbReference type="NCBIfam" id="NF004231">
    <property type="entry name" value="PRK05679.1"/>
    <property type="match status" value="1"/>
</dbReference>
<dbReference type="PANTHER" id="PTHR10851:SF0">
    <property type="entry name" value="PYRIDOXINE-5'-PHOSPHATE OXIDASE"/>
    <property type="match status" value="1"/>
</dbReference>
<dbReference type="PANTHER" id="PTHR10851">
    <property type="entry name" value="PYRIDOXINE-5-PHOSPHATE OXIDASE"/>
    <property type="match status" value="1"/>
</dbReference>
<dbReference type="Pfam" id="PF10590">
    <property type="entry name" value="PNP_phzG_C"/>
    <property type="match status" value="1"/>
</dbReference>
<dbReference type="Pfam" id="PF01243">
    <property type="entry name" value="PNPOx_N"/>
    <property type="match status" value="1"/>
</dbReference>
<dbReference type="PIRSF" id="PIRSF000190">
    <property type="entry name" value="Pyd_amn-ph_oxd"/>
    <property type="match status" value="1"/>
</dbReference>
<dbReference type="SUPFAM" id="SSF50475">
    <property type="entry name" value="FMN-binding split barrel"/>
    <property type="match status" value="1"/>
</dbReference>
<dbReference type="PROSITE" id="PS01064">
    <property type="entry name" value="PYRIDOX_OXIDASE"/>
    <property type="match status" value="1"/>
</dbReference>
<proteinExistence type="inferred from homology"/>
<sequence>MTQSLADMRRDYTRDGLAEAQAPGEPFALFHHWFADAVKTEQLPVEANAMTLATVDADGRPHCRVLLLKALDGRGFTFFTNYESAKGQHIAANPFAAMTFFWPALERQVRIEGRVEKVTAKESDDYYQVRPLGSRLGAWASPQSRVIADREELEGLVKATEARFSDTQPHCPEHWGGYRLLPERIEFWQGRASRLHDRLNYRLVDGQWQRERLAP</sequence>
<name>PDXH_PSEE4</name>
<accession>Q1IDT9</accession>
<evidence type="ECO:0000255" key="1">
    <source>
        <dbReference type="HAMAP-Rule" id="MF_01629"/>
    </source>
</evidence>
<protein>
    <recommendedName>
        <fullName evidence="1">Pyridoxine/pyridoxamine 5'-phosphate oxidase</fullName>
        <ecNumber evidence="1">1.4.3.5</ecNumber>
    </recommendedName>
    <alternativeName>
        <fullName evidence="1">PNP/PMP oxidase</fullName>
        <shortName evidence="1">PNPOx</shortName>
    </alternativeName>
    <alternativeName>
        <fullName evidence="1">Pyridoxal 5'-phosphate synthase</fullName>
    </alternativeName>
</protein>